<keyword id="KW-0349">Heme</keyword>
<keyword id="KW-0408">Iron</keyword>
<keyword id="KW-0479">Metal-binding</keyword>
<keyword id="KW-0561">Oxygen transport</keyword>
<keyword id="KW-1185">Reference proteome</keyword>
<keyword id="KW-0813">Transport</keyword>
<feature type="initiator methionine" description="Removed" evidence="1">
    <location>
        <position position="1"/>
    </location>
</feature>
<feature type="chain" id="PRO_0000053102" description="Hemoglobin subunit beta">
    <location>
        <begin position="2"/>
        <end position="148"/>
    </location>
</feature>
<feature type="domain" description="Globin" evidence="2">
    <location>
        <begin position="3"/>
        <end position="148"/>
    </location>
</feature>
<feature type="binding site" description="distal binding residue">
    <location>
        <position position="64"/>
    </location>
    <ligand>
        <name>heme b</name>
        <dbReference type="ChEBI" id="CHEBI:60344"/>
    </ligand>
    <ligandPart>
        <name>Fe</name>
        <dbReference type="ChEBI" id="CHEBI:18248"/>
    </ligandPart>
</feature>
<feature type="binding site" description="proximal binding residue">
    <location>
        <position position="93"/>
    </location>
    <ligand>
        <name>heme b</name>
        <dbReference type="ChEBI" id="CHEBI:60344"/>
    </ligand>
    <ligandPart>
        <name>Fe</name>
        <dbReference type="ChEBI" id="CHEBI:18248"/>
    </ligandPart>
</feature>
<feature type="sequence variant">
    <original>T</original>
    <variation>S</variation>
    <location>
        <position position="87"/>
    </location>
</feature>
<feature type="sequence variant">
    <original>T</original>
    <variation>A</variation>
    <location>
        <position position="122"/>
    </location>
</feature>
<feature type="sequence variant">
    <original>A</original>
    <variation>S</variation>
    <location>
        <position position="137"/>
    </location>
</feature>
<reference key="1">
    <citation type="journal article" date="1994" name="J. Mol. Evol.">
        <title>Tail-to-tail orientation of the Atlantic salmon alpha- and beta-globin genes.</title>
        <authorList>
            <person name="Wagner A."/>
            <person name="Deryckere F."/>
            <person name="McMorrow T."/>
            <person name="Gannon F."/>
        </authorList>
    </citation>
    <scope>NUCLEOTIDE SEQUENCE [MRNA]</scope>
    <source>
        <tissue>Kidney</tissue>
    </source>
</reference>
<reference key="2">
    <citation type="journal article" date="1996" name="DNA Cell Biol.">
        <title>Structural organization and sequence analysis of the globin locus in Atlantic salmon.</title>
        <authorList>
            <person name="McMorrow T."/>
            <person name="Wagner A."/>
            <person name="Deryckere F."/>
            <person name="Gannon F."/>
        </authorList>
    </citation>
    <scope>NUCLEOTIDE SEQUENCE [GENOMIC DNA]</scope>
</reference>
<protein>
    <recommendedName>
        <fullName>Hemoglobin subunit beta</fullName>
    </recommendedName>
    <alternativeName>
        <fullName>Beta-globin</fullName>
    </alternativeName>
    <alternativeName>
        <fullName>Hemoglobin beta chain</fullName>
    </alternativeName>
</protein>
<gene>
    <name type="primary">hbb</name>
</gene>
<proteinExistence type="evidence at transcript level"/>
<comment type="function">
    <text>Involved in oxygen transport from gills to the various peripheral tissues.</text>
</comment>
<comment type="subunit">
    <text>Heterotetramer of two alpha chains and two beta chains.</text>
</comment>
<comment type="tissue specificity">
    <text>Red blood cells.</text>
</comment>
<comment type="similarity">
    <text evidence="2">Belongs to the globin family.</text>
</comment>
<dbReference type="EMBL" id="X69958">
    <property type="protein sequence ID" value="CAA49580.1"/>
    <property type="molecule type" value="mRNA"/>
</dbReference>
<dbReference type="EMBL" id="X97284">
    <property type="protein sequence ID" value="CAA65945.1"/>
    <property type="molecule type" value="Genomic_DNA"/>
</dbReference>
<dbReference type="EMBL" id="X97286">
    <property type="protein sequence ID" value="CAA65948.1"/>
    <property type="molecule type" value="Genomic_DNA"/>
</dbReference>
<dbReference type="PIR" id="S41625">
    <property type="entry name" value="S41625"/>
</dbReference>
<dbReference type="RefSeq" id="NP_001117138.1">
    <property type="nucleotide sequence ID" value="NM_001123666.1"/>
</dbReference>
<dbReference type="SMR" id="Q91473"/>
<dbReference type="STRING" id="8030.ENSSSAP00000075631"/>
<dbReference type="PaxDb" id="8030-ENSSSAP00000075631"/>
<dbReference type="Ensembl" id="ENSSSAT00070072338">
    <property type="protein sequence ID" value="ENSSSAP00070069155"/>
    <property type="gene ID" value="ENSSSAG00070044977"/>
</dbReference>
<dbReference type="GeneID" id="100136576"/>
<dbReference type="KEGG" id="sasa:100136576"/>
<dbReference type="OrthoDB" id="170525at7898"/>
<dbReference type="Proteomes" id="UP000087266">
    <property type="component" value="Chromosome ssa03"/>
</dbReference>
<dbReference type="GO" id="GO:0072562">
    <property type="term" value="C:blood microparticle"/>
    <property type="evidence" value="ECO:0007669"/>
    <property type="project" value="TreeGrafter"/>
</dbReference>
<dbReference type="GO" id="GO:0031838">
    <property type="term" value="C:haptoglobin-hemoglobin complex"/>
    <property type="evidence" value="ECO:0007669"/>
    <property type="project" value="TreeGrafter"/>
</dbReference>
<dbReference type="GO" id="GO:0005833">
    <property type="term" value="C:hemoglobin complex"/>
    <property type="evidence" value="ECO:0007669"/>
    <property type="project" value="InterPro"/>
</dbReference>
<dbReference type="GO" id="GO:0031720">
    <property type="term" value="F:haptoglobin binding"/>
    <property type="evidence" value="ECO:0007669"/>
    <property type="project" value="TreeGrafter"/>
</dbReference>
<dbReference type="GO" id="GO:0020037">
    <property type="term" value="F:heme binding"/>
    <property type="evidence" value="ECO:0007669"/>
    <property type="project" value="InterPro"/>
</dbReference>
<dbReference type="GO" id="GO:0046872">
    <property type="term" value="F:metal ion binding"/>
    <property type="evidence" value="ECO:0007669"/>
    <property type="project" value="UniProtKB-KW"/>
</dbReference>
<dbReference type="GO" id="GO:0043177">
    <property type="term" value="F:organic acid binding"/>
    <property type="evidence" value="ECO:0007669"/>
    <property type="project" value="TreeGrafter"/>
</dbReference>
<dbReference type="GO" id="GO:0019825">
    <property type="term" value="F:oxygen binding"/>
    <property type="evidence" value="ECO:0007669"/>
    <property type="project" value="InterPro"/>
</dbReference>
<dbReference type="GO" id="GO:0005344">
    <property type="term" value="F:oxygen carrier activity"/>
    <property type="evidence" value="ECO:0007669"/>
    <property type="project" value="UniProtKB-KW"/>
</dbReference>
<dbReference type="GO" id="GO:0004601">
    <property type="term" value="F:peroxidase activity"/>
    <property type="evidence" value="ECO:0007669"/>
    <property type="project" value="TreeGrafter"/>
</dbReference>
<dbReference type="GO" id="GO:0042744">
    <property type="term" value="P:hydrogen peroxide catabolic process"/>
    <property type="evidence" value="ECO:0007669"/>
    <property type="project" value="TreeGrafter"/>
</dbReference>
<dbReference type="CDD" id="cd08925">
    <property type="entry name" value="Hb-beta-like"/>
    <property type="match status" value="1"/>
</dbReference>
<dbReference type="FunFam" id="1.10.490.10:FF:000001">
    <property type="entry name" value="Hemoglobin subunit beta"/>
    <property type="match status" value="1"/>
</dbReference>
<dbReference type="Gene3D" id="1.10.490.10">
    <property type="entry name" value="Globins"/>
    <property type="match status" value="1"/>
</dbReference>
<dbReference type="InterPro" id="IPR000971">
    <property type="entry name" value="Globin"/>
</dbReference>
<dbReference type="InterPro" id="IPR009050">
    <property type="entry name" value="Globin-like_sf"/>
</dbReference>
<dbReference type="InterPro" id="IPR012292">
    <property type="entry name" value="Globin/Proto"/>
</dbReference>
<dbReference type="InterPro" id="IPR002337">
    <property type="entry name" value="Hemoglobin_b"/>
</dbReference>
<dbReference type="InterPro" id="IPR050056">
    <property type="entry name" value="Hemoglobin_oxygen_transport"/>
</dbReference>
<dbReference type="PANTHER" id="PTHR11442">
    <property type="entry name" value="HEMOGLOBIN FAMILY MEMBER"/>
    <property type="match status" value="1"/>
</dbReference>
<dbReference type="PANTHER" id="PTHR11442:SF102">
    <property type="entry name" value="HEMOGLOBIN SUBUNIT BETA-1-RELATED"/>
    <property type="match status" value="1"/>
</dbReference>
<dbReference type="Pfam" id="PF00042">
    <property type="entry name" value="Globin"/>
    <property type="match status" value="1"/>
</dbReference>
<dbReference type="PRINTS" id="PR00814">
    <property type="entry name" value="BETAHAEM"/>
</dbReference>
<dbReference type="SUPFAM" id="SSF46458">
    <property type="entry name" value="Globin-like"/>
    <property type="match status" value="1"/>
</dbReference>
<dbReference type="PROSITE" id="PS01033">
    <property type="entry name" value="GLOBIN"/>
    <property type="match status" value="1"/>
</dbReference>
<name>HBB_SALSA</name>
<accession>Q91473</accession>
<accession>Q91466</accession>
<accession>Q91468</accession>
<evidence type="ECO:0000250" key="1"/>
<evidence type="ECO:0000255" key="2">
    <source>
        <dbReference type="PROSITE-ProRule" id="PRU00238"/>
    </source>
</evidence>
<organism>
    <name type="scientific">Salmo salar</name>
    <name type="common">Atlantic salmon</name>
    <dbReference type="NCBI Taxonomy" id="8030"/>
    <lineage>
        <taxon>Eukaryota</taxon>
        <taxon>Metazoa</taxon>
        <taxon>Chordata</taxon>
        <taxon>Craniata</taxon>
        <taxon>Vertebrata</taxon>
        <taxon>Euteleostomi</taxon>
        <taxon>Actinopterygii</taxon>
        <taxon>Neopterygii</taxon>
        <taxon>Teleostei</taxon>
        <taxon>Protacanthopterygii</taxon>
        <taxon>Salmoniformes</taxon>
        <taxon>Salmonidae</taxon>
        <taxon>Salmoninae</taxon>
        <taxon>Salmo</taxon>
    </lineage>
</organism>
<sequence>MVDWTDAERSAIVGLWGKISVDEIGPQALARLLIVSPWTQRHFSTFGNLSTPAAIMGNPAVAKHGKTVMHGLDRAVQNLDDIKNAYTALSVMHSEKLHVDPDNFRLLADCITVCVAAKLGPTVFSADIQEAFQKFLAVVVSALGRQYH</sequence>